<name>PCR9_ARATH</name>
<evidence type="ECO:0000255" key="1"/>
<evidence type="ECO:0000269" key="2">
    <source>
    </source>
</evidence>
<evidence type="ECO:0000305" key="3"/>
<feature type="chain" id="PRO_0000407725" description="Protein PLANT CADMIUM RESISTANCE 9">
    <location>
        <begin position="1"/>
        <end position="148"/>
    </location>
</feature>
<feature type="transmembrane region" description="Helical" evidence="1">
    <location>
        <begin position="59"/>
        <end position="78"/>
    </location>
</feature>
<reference key="1">
    <citation type="journal article" date="2000" name="Nature">
        <title>Sequence and analysis of chromosome 1 of the plant Arabidopsis thaliana.</title>
        <authorList>
            <person name="Theologis A."/>
            <person name="Ecker J.R."/>
            <person name="Palm C.J."/>
            <person name="Federspiel N.A."/>
            <person name="Kaul S."/>
            <person name="White O."/>
            <person name="Alonso J."/>
            <person name="Altafi H."/>
            <person name="Araujo R."/>
            <person name="Bowman C.L."/>
            <person name="Brooks S.Y."/>
            <person name="Buehler E."/>
            <person name="Chan A."/>
            <person name="Chao Q."/>
            <person name="Chen H."/>
            <person name="Cheuk R.F."/>
            <person name="Chin C.W."/>
            <person name="Chung M.K."/>
            <person name="Conn L."/>
            <person name="Conway A.B."/>
            <person name="Conway A.R."/>
            <person name="Creasy T.H."/>
            <person name="Dewar K."/>
            <person name="Dunn P."/>
            <person name="Etgu P."/>
            <person name="Feldblyum T.V."/>
            <person name="Feng J.-D."/>
            <person name="Fong B."/>
            <person name="Fujii C.Y."/>
            <person name="Gill J.E."/>
            <person name="Goldsmith A.D."/>
            <person name="Haas B."/>
            <person name="Hansen N.F."/>
            <person name="Hughes B."/>
            <person name="Huizar L."/>
            <person name="Hunter J.L."/>
            <person name="Jenkins J."/>
            <person name="Johnson-Hopson C."/>
            <person name="Khan S."/>
            <person name="Khaykin E."/>
            <person name="Kim C.J."/>
            <person name="Koo H.L."/>
            <person name="Kremenetskaia I."/>
            <person name="Kurtz D.B."/>
            <person name="Kwan A."/>
            <person name="Lam B."/>
            <person name="Langin-Hooper S."/>
            <person name="Lee A."/>
            <person name="Lee J.M."/>
            <person name="Lenz C.A."/>
            <person name="Li J.H."/>
            <person name="Li Y.-P."/>
            <person name="Lin X."/>
            <person name="Liu S.X."/>
            <person name="Liu Z.A."/>
            <person name="Luros J.S."/>
            <person name="Maiti R."/>
            <person name="Marziali A."/>
            <person name="Militscher J."/>
            <person name="Miranda M."/>
            <person name="Nguyen M."/>
            <person name="Nierman W.C."/>
            <person name="Osborne B.I."/>
            <person name="Pai G."/>
            <person name="Peterson J."/>
            <person name="Pham P.K."/>
            <person name="Rizzo M."/>
            <person name="Rooney T."/>
            <person name="Rowley D."/>
            <person name="Sakano H."/>
            <person name="Salzberg S.L."/>
            <person name="Schwartz J.R."/>
            <person name="Shinn P."/>
            <person name="Southwick A.M."/>
            <person name="Sun H."/>
            <person name="Tallon L.J."/>
            <person name="Tambunga G."/>
            <person name="Toriumi M.J."/>
            <person name="Town C.D."/>
            <person name="Utterback T."/>
            <person name="Van Aken S."/>
            <person name="Vaysberg M."/>
            <person name="Vysotskaia V.S."/>
            <person name="Walker M."/>
            <person name="Wu D."/>
            <person name="Yu G."/>
            <person name="Fraser C.M."/>
            <person name="Venter J.C."/>
            <person name="Davis R.W."/>
        </authorList>
    </citation>
    <scope>NUCLEOTIDE SEQUENCE [LARGE SCALE GENOMIC DNA]</scope>
    <source>
        <strain>cv. Columbia</strain>
    </source>
</reference>
<reference key="2">
    <citation type="journal article" date="2017" name="Plant J.">
        <title>Araport11: a complete reannotation of the Arabidopsis thaliana reference genome.</title>
        <authorList>
            <person name="Cheng C.Y."/>
            <person name="Krishnakumar V."/>
            <person name="Chan A.P."/>
            <person name="Thibaud-Nissen F."/>
            <person name="Schobel S."/>
            <person name="Town C.D."/>
        </authorList>
    </citation>
    <scope>GENOME REANNOTATION</scope>
    <source>
        <strain>cv. Columbia</strain>
    </source>
</reference>
<reference key="3">
    <citation type="journal article" date="2004" name="Plant Physiol.">
        <title>A novel family of cys-rich membrane proteins mediates cadmium resistance in Arabidopsis.</title>
        <authorList>
            <person name="Song W.Y."/>
            <person name="Martinoia E."/>
            <person name="Lee J."/>
            <person name="Kim D."/>
            <person name="Kim D.Y."/>
            <person name="Vogt E."/>
            <person name="Shim D."/>
            <person name="Choi K.S."/>
            <person name="Hwang I."/>
            <person name="Lee Y."/>
        </authorList>
    </citation>
    <scope>FUNCTION</scope>
    <scope>GENE FAMILY</scope>
    <scope>NOMENCLATURE</scope>
</reference>
<accession>P0CW98</accession>
<accession>Q3ECM5</accession>
<keyword id="KW-0472">Membrane</keyword>
<keyword id="KW-1185">Reference proteome</keyword>
<keyword id="KW-0812">Transmembrane</keyword>
<keyword id="KW-1133">Transmembrane helix</keyword>
<proteinExistence type="inferred from homology"/>
<sequence length="148" mass="16260">MSEQEGKNEKKVTEGQWTTGLYDCLSEDISTCCFTWVCPCVAFGRIAEILDKGETSRGLAGLMVVAMSSIGCGWYYASKYRAKLRHQYALPEAPCADGAIHCFCCPCALTQEHRELKHRGLDPSLGWNIENGGLNSNTPPFVASGMDR</sequence>
<protein>
    <recommendedName>
        <fullName>Protein PLANT CADMIUM RESISTANCE 9</fullName>
        <shortName>AtPCR9</shortName>
    </recommendedName>
</protein>
<dbReference type="EMBL" id="AC008051">
    <property type="status" value="NOT_ANNOTATED_CDS"/>
    <property type="molecule type" value="Genomic_DNA"/>
</dbReference>
<dbReference type="EMBL" id="CP002684">
    <property type="protein sequence ID" value="AEE33535.1"/>
    <property type="molecule type" value="Genomic_DNA"/>
</dbReference>
<dbReference type="RefSeq" id="NP_176128.1">
    <property type="nucleotide sequence ID" value="NM_104612.2"/>
</dbReference>
<dbReference type="FunCoup" id="P0CW98">
    <property type="interactions" value="29"/>
</dbReference>
<dbReference type="STRING" id="3702.P0CW98"/>
<dbReference type="PaxDb" id="3702-AT1G58320.1"/>
<dbReference type="ProteomicsDB" id="236370"/>
<dbReference type="EnsemblPlants" id="AT1G58320.1">
    <property type="protein sequence ID" value="AT1G58320.1"/>
    <property type="gene ID" value="AT1G58320"/>
</dbReference>
<dbReference type="GeneID" id="842201"/>
<dbReference type="Gramene" id="AT1G58320.1">
    <property type="protein sequence ID" value="AT1G58320.1"/>
    <property type="gene ID" value="AT1G58320"/>
</dbReference>
<dbReference type="KEGG" id="ath:AT1G58320"/>
<dbReference type="Araport" id="AT1G58320"/>
<dbReference type="TAIR" id="AT1G58320"/>
<dbReference type="eggNOG" id="ENOG502S00T">
    <property type="taxonomic scope" value="Eukaryota"/>
</dbReference>
<dbReference type="HOGENOM" id="CLU_083147_1_2_1"/>
<dbReference type="InParanoid" id="P0CW98"/>
<dbReference type="OMA" id="EDISTCY"/>
<dbReference type="OrthoDB" id="1045822at2759"/>
<dbReference type="PhylomeDB" id="P0CW98"/>
<dbReference type="PRO" id="PR:P0CW98"/>
<dbReference type="Proteomes" id="UP000006548">
    <property type="component" value="Chromosome 1"/>
</dbReference>
<dbReference type="ExpressionAtlas" id="P0CW98">
    <property type="expression patterns" value="baseline and differential"/>
</dbReference>
<dbReference type="GO" id="GO:0016020">
    <property type="term" value="C:membrane"/>
    <property type="evidence" value="ECO:0007669"/>
    <property type="project" value="UniProtKB-SubCell"/>
</dbReference>
<dbReference type="InterPro" id="IPR006461">
    <property type="entry name" value="PLAC_motif_containing"/>
</dbReference>
<dbReference type="NCBIfam" id="TIGR01571">
    <property type="entry name" value="A_thal_Cys_rich"/>
    <property type="match status" value="1"/>
</dbReference>
<dbReference type="PANTHER" id="PTHR15907">
    <property type="entry name" value="DUF614 FAMILY PROTEIN-RELATED"/>
    <property type="match status" value="1"/>
</dbReference>
<dbReference type="Pfam" id="PF04749">
    <property type="entry name" value="PLAC8"/>
    <property type="match status" value="1"/>
</dbReference>
<gene>
    <name type="primary">PCR9</name>
    <name type="ordered locus">At1g58320</name>
    <name type="ORF">F19C14.14</name>
</gene>
<organism>
    <name type="scientific">Arabidopsis thaliana</name>
    <name type="common">Mouse-ear cress</name>
    <dbReference type="NCBI Taxonomy" id="3702"/>
    <lineage>
        <taxon>Eukaryota</taxon>
        <taxon>Viridiplantae</taxon>
        <taxon>Streptophyta</taxon>
        <taxon>Embryophyta</taxon>
        <taxon>Tracheophyta</taxon>
        <taxon>Spermatophyta</taxon>
        <taxon>Magnoliopsida</taxon>
        <taxon>eudicotyledons</taxon>
        <taxon>Gunneridae</taxon>
        <taxon>Pentapetalae</taxon>
        <taxon>rosids</taxon>
        <taxon>malvids</taxon>
        <taxon>Brassicales</taxon>
        <taxon>Brassicaceae</taxon>
        <taxon>Camelineae</taxon>
        <taxon>Arabidopsis</taxon>
    </lineage>
</organism>
<comment type="function">
    <text evidence="2">May be involved in cadmium resistance.</text>
</comment>
<comment type="subcellular location">
    <subcellularLocation>
        <location evidence="3">Membrane</location>
        <topology evidence="3">Single-pass membrane protein</topology>
    </subcellularLocation>
</comment>
<comment type="similarity">
    <text evidence="3">Belongs to the cornifelin family.</text>
</comment>